<evidence type="ECO:0000255" key="1">
    <source>
        <dbReference type="HAMAP-Rule" id="MF_00692"/>
    </source>
</evidence>
<reference key="1">
    <citation type="journal article" date="2006" name="Mol. Microbiol.">
        <title>Role of pathogenicity island-associated integrases in the genome plasticity of uropathogenic Escherichia coli strain 536.</title>
        <authorList>
            <person name="Hochhut B."/>
            <person name="Wilde C."/>
            <person name="Balling G."/>
            <person name="Middendorf B."/>
            <person name="Dobrindt U."/>
            <person name="Brzuszkiewicz E."/>
            <person name="Gottschalk G."/>
            <person name="Carniel E."/>
            <person name="Hacker J."/>
        </authorList>
    </citation>
    <scope>NUCLEOTIDE SEQUENCE [LARGE SCALE GENOMIC DNA]</scope>
    <source>
        <strain>536 / UPEC</strain>
    </source>
</reference>
<comment type="function">
    <text evidence="1">Nucleotidyltransferase involved in the post-translational modification of proteins. It can catalyze the addition of adenosine monophosphate (AMP) or uridine monophosphate (UMP) to a protein, resulting in modifications known as AMPylation and UMPylation.</text>
</comment>
<comment type="catalytic activity">
    <reaction evidence="1">
        <text>L-seryl-[protein] + ATP = 3-O-(5'-adenylyl)-L-seryl-[protein] + diphosphate</text>
        <dbReference type="Rhea" id="RHEA:58120"/>
        <dbReference type="Rhea" id="RHEA-COMP:9863"/>
        <dbReference type="Rhea" id="RHEA-COMP:15073"/>
        <dbReference type="ChEBI" id="CHEBI:29999"/>
        <dbReference type="ChEBI" id="CHEBI:30616"/>
        <dbReference type="ChEBI" id="CHEBI:33019"/>
        <dbReference type="ChEBI" id="CHEBI:142516"/>
        <dbReference type="EC" id="2.7.7.108"/>
    </reaction>
</comment>
<comment type="catalytic activity">
    <reaction evidence="1">
        <text>L-threonyl-[protein] + ATP = 3-O-(5'-adenylyl)-L-threonyl-[protein] + diphosphate</text>
        <dbReference type="Rhea" id="RHEA:54292"/>
        <dbReference type="Rhea" id="RHEA-COMP:11060"/>
        <dbReference type="Rhea" id="RHEA-COMP:13847"/>
        <dbReference type="ChEBI" id="CHEBI:30013"/>
        <dbReference type="ChEBI" id="CHEBI:30616"/>
        <dbReference type="ChEBI" id="CHEBI:33019"/>
        <dbReference type="ChEBI" id="CHEBI:138113"/>
        <dbReference type="EC" id="2.7.7.108"/>
    </reaction>
</comment>
<comment type="catalytic activity">
    <reaction evidence="1">
        <text>L-tyrosyl-[protein] + ATP = O-(5'-adenylyl)-L-tyrosyl-[protein] + diphosphate</text>
        <dbReference type="Rhea" id="RHEA:54288"/>
        <dbReference type="Rhea" id="RHEA-COMP:10136"/>
        <dbReference type="Rhea" id="RHEA-COMP:13846"/>
        <dbReference type="ChEBI" id="CHEBI:30616"/>
        <dbReference type="ChEBI" id="CHEBI:33019"/>
        <dbReference type="ChEBI" id="CHEBI:46858"/>
        <dbReference type="ChEBI" id="CHEBI:83624"/>
        <dbReference type="EC" id="2.7.7.108"/>
    </reaction>
</comment>
<comment type="catalytic activity">
    <reaction evidence="1">
        <text>L-histidyl-[protein] + UTP = N(tele)-(5'-uridylyl)-L-histidyl-[protein] + diphosphate</text>
        <dbReference type="Rhea" id="RHEA:83891"/>
        <dbReference type="Rhea" id="RHEA-COMP:9745"/>
        <dbReference type="Rhea" id="RHEA-COMP:20239"/>
        <dbReference type="ChEBI" id="CHEBI:29979"/>
        <dbReference type="ChEBI" id="CHEBI:33019"/>
        <dbReference type="ChEBI" id="CHEBI:46398"/>
        <dbReference type="ChEBI" id="CHEBI:233474"/>
    </reaction>
</comment>
<comment type="catalytic activity">
    <reaction evidence="1">
        <text>L-seryl-[protein] + UTP = O-(5'-uridylyl)-L-seryl-[protein] + diphosphate</text>
        <dbReference type="Rhea" id="RHEA:64604"/>
        <dbReference type="Rhea" id="RHEA-COMP:9863"/>
        <dbReference type="Rhea" id="RHEA-COMP:16635"/>
        <dbReference type="ChEBI" id="CHEBI:29999"/>
        <dbReference type="ChEBI" id="CHEBI:33019"/>
        <dbReference type="ChEBI" id="CHEBI:46398"/>
        <dbReference type="ChEBI" id="CHEBI:156051"/>
    </reaction>
</comment>
<comment type="catalytic activity">
    <reaction evidence="1">
        <text>L-tyrosyl-[protein] + UTP = O-(5'-uridylyl)-L-tyrosyl-[protein] + diphosphate</text>
        <dbReference type="Rhea" id="RHEA:83887"/>
        <dbReference type="Rhea" id="RHEA-COMP:10136"/>
        <dbReference type="Rhea" id="RHEA-COMP:20238"/>
        <dbReference type="ChEBI" id="CHEBI:33019"/>
        <dbReference type="ChEBI" id="CHEBI:46398"/>
        <dbReference type="ChEBI" id="CHEBI:46858"/>
        <dbReference type="ChEBI" id="CHEBI:90602"/>
    </reaction>
</comment>
<comment type="cofactor">
    <cofactor evidence="1">
        <name>Mg(2+)</name>
        <dbReference type="ChEBI" id="CHEBI:18420"/>
    </cofactor>
    <cofactor evidence="1">
        <name>Mn(2+)</name>
        <dbReference type="ChEBI" id="CHEBI:29035"/>
    </cofactor>
</comment>
<comment type="similarity">
    <text evidence="1">Belongs to the SELO family.</text>
</comment>
<organism>
    <name type="scientific">Escherichia coli O6:K15:H31 (strain 536 / UPEC)</name>
    <dbReference type="NCBI Taxonomy" id="362663"/>
    <lineage>
        <taxon>Bacteria</taxon>
        <taxon>Pseudomonadati</taxon>
        <taxon>Pseudomonadota</taxon>
        <taxon>Gammaproteobacteria</taxon>
        <taxon>Enterobacterales</taxon>
        <taxon>Enterobacteriaceae</taxon>
        <taxon>Escherichia</taxon>
    </lineage>
</organism>
<accession>Q0THC2</accession>
<gene>
    <name evidence="1" type="primary">ydiU</name>
    <name evidence="1" type="synonym">selO</name>
    <name type="ordered locus">ECP_1654</name>
</gene>
<feature type="chain" id="PRO_0000271827" description="Protein nucleotidyltransferase YdiU">
    <location>
        <begin position="1"/>
        <end position="478"/>
    </location>
</feature>
<feature type="active site" description="Proton acceptor" evidence="1">
    <location>
        <position position="246"/>
    </location>
</feature>
<feature type="binding site" evidence="1">
    <location>
        <position position="84"/>
    </location>
    <ligand>
        <name>ATP</name>
        <dbReference type="ChEBI" id="CHEBI:30616"/>
    </ligand>
</feature>
<feature type="binding site" evidence="1">
    <location>
        <position position="86"/>
    </location>
    <ligand>
        <name>ATP</name>
        <dbReference type="ChEBI" id="CHEBI:30616"/>
    </ligand>
</feature>
<feature type="binding site" evidence="1">
    <location>
        <position position="87"/>
    </location>
    <ligand>
        <name>ATP</name>
        <dbReference type="ChEBI" id="CHEBI:30616"/>
    </ligand>
</feature>
<feature type="binding site" evidence="1">
    <location>
        <position position="107"/>
    </location>
    <ligand>
        <name>ATP</name>
        <dbReference type="ChEBI" id="CHEBI:30616"/>
    </ligand>
</feature>
<feature type="binding site" evidence="1">
    <location>
        <position position="119"/>
    </location>
    <ligand>
        <name>ATP</name>
        <dbReference type="ChEBI" id="CHEBI:30616"/>
    </ligand>
</feature>
<feature type="binding site" evidence="1">
    <location>
        <position position="120"/>
    </location>
    <ligand>
        <name>ATP</name>
        <dbReference type="ChEBI" id="CHEBI:30616"/>
    </ligand>
</feature>
<feature type="binding site" evidence="1">
    <location>
        <position position="170"/>
    </location>
    <ligand>
        <name>ATP</name>
        <dbReference type="ChEBI" id="CHEBI:30616"/>
    </ligand>
</feature>
<feature type="binding site" evidence="1">
    <location>
        <position position="177"/>
    </location>
    <ligand>
        <name>ATP</name>
        <dbReference type="ChEBI" id="CHEBI:30616"/>
    </ligand>
</feature>
<feature type="binding site" evidence="1">
    <location>
        <position position="247"/>
    </location>
    <ligand>
        <name>Mg(2+)</name>
        <dbReference type="ChEBI" id="CHEBI:18420"/>
    </ligand>
</feature>
<feature type="binding site" evidence="1">
    <location>
        <position position="256"/>
    </location>
    <ligand>
        <name>ATP</name>
        <dbReference type="ChEBI" id="CHEBI:30616"/>
    </ligand>
</feature>
<feature type="binding site" evidence="1">
    <location>
        <position position="256"/>
    </location>
    <ligand>
        <name>Mg(2+)</name>
        <dbReference type="ChEBI" id="CHEBI:18420"/>
    </ligand>
</feature>
<proteinExistence type="inferred from homology"/>
<protein>
    <recommendedName>
        <fullName evidence="1">Protein nucleotidyltransferase YdiU</fullName>
        <ecNumber evidence="1">2.7.7.-</ecNumber>
    </recommendedName>
    <alternativeName>
        <fullName evidence="1">Protein adenylyltransferase YdiU</fullName>
        <ecNumber evidence="1">2.7.7.108</ecNumber>
    </alternativeName>
    <alternativeName>
        <fullName evidence="1">Protein uridylyltransferase YdiU</fullName>
        <ecNumber evidence="1">2.7.7.-</ecNumber>
    </alternativeName>
</protein>
<sequence>MTLSFITRWRDELPETYTALSPTPLNNARLIWHNTELANTLSIPSSLFKNSAGVWGGENLLPGMSPLAQVYSGHQFGVWAGQLGDGRGILLGEQLLADGTTMDWHLKGAGLTPYSRMGDGRAVLRSTIRESLASEAMHYLGIPTTRALSIVTSDSPVYRETVESGAMLMRVAPSHLRFGHFEHFYYRREPEKVRQLADFAIRHYWSHLDDEEDKYRLWFTDVVARTASLIAQWQTVGFAHGVMNTDNMSLLGLTLDYGPFGFLDDYEPGFICNHSDHQGRYSFDNQPAVALWNLQRLAQTLSPFVAVDALNEALDSYQQVLLTHYGQRMRQKLGFMTEQKEDNALLNELFSLMARERSDYTRTFRMLSLTEQHSAASPLRDEFIDRAAFDDWFARYRGRLQQDEITDSERQQLMQSVNPALVLRNWLAQRAIEAAEKGDMTELHRLHEALRNPFSDRDDDYVSRPPDWGKRLEVSCSS</sequence>
<name>SELO_ECOL5</name>
<dbReference type="EC" id="2.7.7.-" evidence="1"/>
<dbReference type="EC" id="2.7.7.108" evidence="1"/>
<dbReference type="EMBL" id="CP000247">
    <property type="protein sequence ID" value="ABG69657.1"/>
    <property type="molecule type" value="Genomic_DNA"/>
</dbReference>
<dbReference type="RefSeq" id="WP_000175650.1">
    <property type="nucleotide sequence ID" value="NC_008253.1"/>
</dbReference>
<dbReference type="SMR" id="Q0THC2"/>
<dbReference type="KEGG" id="ecp:ECP_1654"/>
<dbReference type="HOGENOM" id="CLU_010245_4_0_6"/>
<dbReference type="Proteomes" id="UP000009182">
    <property type="component" value="Chromosome"/>
</dbReference>
<dbReference type="GO" id="GO:0070733">
    <property type="term" value="F:AMPylase activity"/>
    <property type="evidence" value="ECO:0007669"/>
    <property type="project" value="RHEA"/>
</dbReference>
<dbReference type="GO" id="GO:0005524">
    <property type="term" value="F:ATP binding"/>
    <property type="evidence" value="ECO:0007669"/>
    <property type="project" value="UniProtKB-UniRule"/>
</dbReference>
<dbReference type="GO" id="GO:0000287">
    <property type="term" value="F:magnesium ion binding"/>
    <property type="evidence" value="ECO:0007669"/>
    <property type="project" value="UniProtKB-UniRule"/>
</dbReference>
<dbReference type="HAMAP" id="MF_00692">
    <property type="entry name" value="YdiU_SelO"/>
    <property type="match status" value="1"/>
</dbReference>
<dbReference type="InterPro" id="IPR054838">
    <property type="entry name" value="adnlytase_SelO"/>
</dbReference>
<dbReference type="InterPro" id="IPR003846">
    <property type="entry name" value="SelO"/>
</dbReference>
<dbReference type="NCBIfam" id="NF040880">
    <property type="entry name" value="adnlytase_SelO"/>
    <property type="match status" value="1"/>
</dbReference>
<dbReference type="NCBIfam" id="NF000658">
    <property type="entry name" value="PRK00029.1"/>
    <property type="match status" value="1"/>
</dbReference>
<dbReference type="PANTHER" id="PTHR32057">
    <property type="entry name" value="PROTEIN ADENYLYLTRANSFERASE SELO, MITOCHONDRIAL"/>
    <property type="match status" value="1"/>
</dbReference>
<dbReference type="PANTHER" id="PTHR32057:SF14">
    <property type="entry name" value="PROTEIN ADENYLYLTRANSFERASE SELO, MITOCHONDRIAL"/>
    <property type="match status" value="1"/>
</dbReference>
<dbReference type="Pfam" id="PF02696">
    <property type="entry name" value="SelO"/>
    <property type="match status" value="1"/>
</dbReference>
<keyword id="KW-0067">ATP-binding</keyword>
<keyword id="KW-0460">Magnesium</keyword>
<keyword id="KW-0464">Manganese</keyword>
<keyword id="KW-0479">Metal-binding</keyword>
<keyword id="KW-0547">Nucleotide-binding</keyword>
<keyword id="KW-0548">Nucleotidyltransferase</keyword>
<keyword id="KW-0808">Transferase</keyword>